<sequence length="583" mass="60785">MKRSLQALYCQLLSFLLTLALTEALVFAAQEPSPRESLQVSPSGTIPGTMVTASLSSTRHSSMVATPASVVTPTPHPDGPSSQATAPMATTTPHLDGHPPTNTISTIMATASTPHSEGSLSTGPLPAAMATTSSHSEGRAPGETAPTILLTKPGEATSRPPTAPSRATIRRPPRPPGSSRKGAGSSPRPIPAAPSGHAGRKDGQRGRNQSSTHLGQKRPLGKIFQIYKGNFTGSVEPDPSTFTPRNPLWGYSSSPQPQTVAATSAPSRTSWVPPTTPLVPVEDKPSLSRADQGGGSTFTSQGGEPDATAASGTPASQQRAPVPSQRPHGDPQDGSSHSDSWLTVTPGTSRPPSTNSGVFAATTGPIQAAFDASVSVPSEGLPQGTSLAPQAPAHPTWASESTVSQAEEKAVATPTPTMMGRVPSPLSTVVSTATGNFLNRLVPAGTWKPGTAGNISHVAEGDKPQQRATICLSKMDIAWVILAISVPISSCSVLLTVCCLRRKKKPANPENSLSYWNNAITMDYFSKHAVELPREIQSLETSEDQLSEPRSPANGDYRDTGMVLVNPFCQETLFVGNDQVSEI</sequence>
<dbReference type="EMBL" id="BC147949">
    <property type="protein sequence ID" value="AAI47950.1"/>
    <property type="molecule type" value="mRNA"/>
</dbReference>
<dbReference type="RefSeq" id="NP_001095409.1">
    <property type="nucleotide sequence ID" value="NM_001101939.2"/>
</dbReference>
<dbReference type="FunCoup" id="A6QLF8">
    <property type="interactions" value="313"/>
</dbReference>
<dbReference type="STRING" id="9913.ENSBTAP00000024636"/>
<dbReference type="PaxDb" id="9913-ENSBTAP00000024636"/>
<dbReference type="GeneID" id="511034"/>
<dbReference type="KEGG" id="bta:511034"/>
<dbReference type="CTD" id="66000"/>
<dbReference type="eggNOG" id="ENOG502RXTY">
    <property type="taxonomic scope" value="Eukaryota"/>
</dbReference>
<dbReference type="InParanoid" id="A6QLF8"/>
<dbReference type="OrthoDB" id="9944393at2759"/>
<dbReference type="Proteomes" id="UP000009136">
    <property type="component" value="Unplaced"/>
</dbReference>
<dbReference type="GO" id="GO:0030424">
    <property type="term" value="C:axon"/>
    <property type="evidence" value="ECO:0000250"/>
    <property type="project" value="UniProtKB"/>
</dbReference>
<dbReference type="GO" id="GO:1904115">
    <property type="term" value="C:axon cytoplasm"/>
    <property type="evidence" value="ECO:0007669"/>
    <property type="project" value="GOC"/>
</dbReference>
<dbReference type="GO" id="GO:0030425">
    <property type="term" value="C:dendrite"/>
    <property type="evidence" value="ECO:0007669"/>
    <property type="project" value="UniProtKB-SubCell"/>
</dbReference>
<dbReference type="GO" id="GO:0005769">
    <property type="term" value="C:early endosome"/>
    <property type="evidence" value="ECO:0000250"/>
    <property type="project" value="UniProtKB"/>
</dbReference>
<dbReference type="GO" id="GO:0010008">
    <property type="term" value="C:endosome membrane"/>
    <property type="evidence" value="ECO:0000250"/>
    <property type="project" value="UniProtKB"/>
</dbReference>
<dbReference type="GO" id="GO:0014069">
    <property type="term" value="C:postsynaptic density"/>
    <property type="evidence" value="ECO:0000250"/>
    <property type="project" value="UniProtKB"/>
</dbReference>
<dbReference type="GO" id="GO:0036477">
    <property type="term" value="C:somatodendritic compartment"/>
    <property type="evidence" value="ECO:0000250"/>
    <property type="project" value="UniProtKB"/>
</dbReference>
<dbReference type="GO" id="GO:1990416">
    <property type="term" value="P:cellular response to brain-derived neurotrophic factor stimulus"/>
    <property type="evidence" value="ECO:0000250"/>
    <property type="project" value="UniProtKB"/>
</dbReference>
<dbReference type="GO" id="GO:0097484">
    <property type="term" value="P:dendrite extension"/>
    <property type="evidence" value="ECO:0000250"/>
    <property type="project" value="UniProtKB"/>
</dbReference>
<dbReference type="GO" id="GO:0021542">
    <property type="term" value="P:dentate gyrus development"/>
    <property type="evidence" value="ECO:0000250"/>
    <property type="project" value="UniProtKB"/>
</dbReference>
<dbReference type="GO" id="GO:0098815">
    <property type="term" value="P:modulation of excitatory postsynaptic potential"/>
    <property type="evidence" value="ECO:0000250"/>
    <property type="project" value="UniProtKB"/>
</dbReference>
<dbReference type="GO" id="GO:0031175">
    <property type="term" value="P:neuron projection development"/>
    <property type="evidence" value="ECO:0000250"/>
    <property type="project" value="UniProtKB"/>
</dbReference>
<dbReference type="GO" id="GO:0051388">
    <property type="term" value="P:positive regulation of neurotrophin TRK receptor signaling pathway"/>
    <property type="evidence" value="ECO:0000250"/>
    <property type="project" value="UniProtKB"/>
</dbReference>
<dbReference type="GO" id="GO:0097106">
    <property type="term" value="P:postsynaptic density organization"/>
    <property type="evidence" value="ECO:0000250"/>
    <property type="project" value="UniProtKB"/>
</dbReference>
<dbReference type="GO" id="GO:0006898">
    <property type="term" value="P:receptor-mediated endocytosis"/>
    <property type="evidence" value="ECO:0000250"/>
    <property type="project" value="UniProtKB"/>
</dbReference>
<dbReference type="GO" id="GO:0008090">
    <property type="term" value="P:retrograde axonal transport"/>
    <property type="evidence" value="ECO:0000250"/>
    <property type="project" value="UniProtKB"/>
</dbReference>
<dbReference type="InterPro" id="IPR031508">
    <property type="entry name" value="TMEM108"/>
</dbReference>
<dbReference type="PANTHER" id="PTHR28673">
    <property type="entry name" value="TRANSMEMBRANE PROTEIN 108"/>
    <property type="match status" value="1"/>
</dbReference>
<dbReference type="PANTHER" id="PTHR28673:SF1">
    <property type="entry name" value="TRANSMEMBRANE PROTEIN 108"/>
    <property type="match status" value="1"/>
</dbReference>
<dbReference type="Pfam" id="PF15759">
    <property type="entry name" value="TMEM108"/>
    <property type="match status" value="1"/>
</dbReference>
<dbReference type="PROSITE" id="PS00430">
    <property type="entry name" value="TONB_DEPENDENT_REC_1"/>
    <property type="match status" value="1"/>
</dbReference>
<comment type="function">
    <text evidence="2">Transmembrane protein required for proper cognitive functions. Involved in the development of dentate gyrus (DG) neuron circuitry, is necessary for AMPA receptors surface expression and proper excitatory postsynaptic currents of DG granule neurons. Regulates the organization and stability of the microtubule network of sensory neurons to allow axonal transport. Through the interaction with DST, mediates the docking of the dynein/dynactin motor complex to vesicle cargos for retrograde axonal transport. In hippocampal neurons, required for BDNF-dependent dendrite outgrowth. Cooperates with SH3GL2 and recruits the WAVE1 complex to facilitate actin-dependent BDNF:NTRK2 early endocytic trafficking and mediate signaling from early endosomes.</text>
</comment>
<comment type="subunit">
    <text evidence="2">Interacts with DST (isoform 1). Interacts with SH3GL2. Interacts (via N-terminus) with CYFIP1 and CYFIP2; the interactions associate TMEM108 with the WAVE1 complex.</text>
</comment>
<comment type="subcellular location">
    <subcellularLocation>
        <location evidence="2">Membrane</location>
        <topology evidence="3">Multi-pass membrane protein</topology>
    </subcellularLocation>
    <subcellularLocation>
        <location evidence="2">Postsynaptic density</location>
    </subcellularLocation>
    <subcellularLocation>
        <location evidence="2">Endosome membrane</location>
    </subcellularLocation>
    <subcellularLocation>
        <location evidence="2">Cell projection</location>
        <location evidence="2">Axon</location>
    </subcellularLocation>
    <subcellularLocation>
        <location evidence="2">Cell projection</location>
        <location evidence="2">Dendrite</location>
    </subcellularLocation>
    <subcellularLocation>
        <location evidence="2">Early endosome</location>
    </subcellularLocation>
</comment>
<comment type="PTM">
    <text evidence="2">Glycosylated.</text>
</comment>
<accession>A6QLF8</accession>
<evidence type="ECO:0000250" key="1">
    <source>
        <dbReference type="UniProtKB" id="Q6UXF1"/>
    </source>
</evidence>
<evidence type="ECO:0000250" key="2">
    <source>
        <dbReference type="UniProtKB" id="Q8BHE4"/>
    </source>
</evidence>
<evidence type="ECO:0000255" key="3"/>
<evidence type="ECO:0000256" key="4">
    <source>
        <dbReference type="SAM" id="MobiDB-lite"/>
    </source>
</evidence>
<evidence type="ECO:0000305" key="5"/>
<keyword id="KW-0966">Cell projection</keyword>
<keyword id="KW-0967">Endosome</keyword>
<keyword id="KW-0325">Glycoprotein</keyword>
<keyword id="KW-0472">Membrane</keyword>
<keyword id="KW-1185">Reference proteome</keyword>
<keyword id="KW-0770">Synapse</keyword>
<keyword id="KW-0812">Transmembrane</keyword>
<keyword id="KW-1133">Transmembrane helix</keyword>
<organism>
    <name type="scientific">Bos taurus</name>
    <name type="common">Bovine</name>
    <dbReference type="NCBI Taxonomy" id="9913"/>
    <lineage>
        <taxon>Eukaryota</taxon>
        <taxon>Metazoa</taxon>
        <taxon>Chordata</taxon>
        <taxon>Craniata</taxon>
        <taxon>Vertebrata</taxon>
        <taxon>Euteleostomi</taxon>
        <taxon>Mammalia</taxon>
        <taxon>Eutheria</taxon>
        <taxon>Laurasiatheria</taxon>
        <taxon>Artiodactyla</taxon>
        <taxon>Ruminantia</taxon>
        <taxon>Pecora</taxon>
        <taxon>Bovidae</taxon>
        <taxon>Bovinae</taxon>
        <taxon>Bos</taxon>
    </lineage>
</organism>
<reference key="1">
    <citation type="submission" date="2007-06" db="EMBL/GenBank/DDBJ databases">
        <authorList>
            <consortium name="NIH - Mammalian Gene Collection (MGC) project"/>
        </authorList>
    </citation>
    <scope>NUCLEOTIDE SEQUENCE [LARGE SCALE MRNA]</scope>
    <source>
        <strain>Hereford</strain>
        <tissue>Fetal lung</tissue>
    </source>
</reference>
<protein>
    <recommendedName>
        <fullName evidence="1">Transmembrane protein 108</fullName>
    </recommendedName>
    <alternativeName>
        <fullName evidence="5">Retrolinkin</fullName>
    </alternativeName>
</protein>
<name>TM108_BOVIN</name>
<gene>
    <name evidence="1" type="primary">TMEM108</name>
</gene>
<proteinExistence type="evidence at transcript level"/>
<feature type="chain" id="PRO_0000367276" description="Transmembrane protein 108">
    <location>
        <begin position="1"/>
        <end position="583"/>
    </location>
</feature>
<feature type="transmembrane region" description="Helical" evidence="3">
    <location>
        <begin position="7"/>
        <end position="27"/>
    </location>
</feature>
<feature type="transmembrane region" description="Helical" evidence="3">
    <location>
        <begin position="477"/>
        <end position="497"/>
    </location>
</feature>
<feature type="region of interest" description="Interacts with SH3GL2" evidence="2">
    <location>
        <begin position="31"/>
        <end position="176"/>
    </location>
</feature>
<feature type="region of interest" description="Disordered" evidence="4">
    <location>
        <begin position="71"/>
        <end position="360"/>
    </location>
</feature>
<feature type="region of interest" description="Interacts with DST (isoform 1)" evidence="2">
    <location>
        <begin position="180"/>
        <end position="413"/>
    </location>
</feature>
<feature type="region of interest" description="Disordered" evidence="4">
    <location>
        <begin position="376"/>
        <end position="404"/>
    </location>
</feature>
<feature type="region of interest" description="Interaction with CYFIP2" evidence="2">
    <location>
        <begin position="498"/>
        <end position="583"/>
    </location>
</feature>
<feature type="compositionally biased region" description="Polar residues" evidence="4">
    <location>
        <begin position="80"/>
        <end position="93"/>
    </location>
</feature>
<feature type="compositionally biased region" description="Polar residues" evidence="4">
    <location>
        <begin position="100"/>
        <end position="122"/>
    </location>
</feature>
<feature type="compositionally biased region" description="Low complexity" evidence="4">
    <location>
        <begin position="177"/>
        <end position="187"/>
    </location>
</feature>
<feature type="compositionally biased region" description="Polar residues" evidence="4">
    <location>
        <begin position="251"/>
        <end position="273"/>
    </location>
</feature>
<feature type="compositionally biased region" description="Polar residues" evidence="4">
    <location>
        <begin position="310"/>
        <end position="319"/>
    </location>
</feature>
<feature type="compositionally biased region" description="Polar residues" evidence="4">
    <location>
        <begin position="333"/>
        <end position="357"/>
    </location>
</feature>